<dbReference type="EMBL" id="AF394688">
    <property type="protein sequence ID" value="AAL86372.1"/>
    <property type="molecule type" value="mRNA"/>
</dbReference>
<dbReference type="SMR" id="Q8T6Z0"/>
<dbReference type="GO" id="GO:0005509">
    <property type="term" value="F:calcium ion binding"/>
    <property type="evidence" value="ECO:0007669"/>
    <property type="project" value="InterPro"/>
</dbReference>
<dbReference type="GO" id="GO:0008218">
    <property type="term" value="P:bioluminescence"/>
    <property type="evidence" value="ECO:0007669"/>
    <property type="project" value="UniProtKB-KW"/>
</dbReference>
<dbReference type="CDD" id="cd00051">
    <property type="entry name" value="EFh"/>
    <property type="match status" value="1"/>
</dbReference>
<dbReference type="Gene3D" id="1.10.238.10">
    <property type="entry name" value="EF-hand"/>
    <property type="match status" value="1"/>
</dbReference>
<dbReference type="InterPro" id="IPR050145">
    <property type="entry name" value="Centrin_CML-like"/>
</dbReference>
<dbReference type="InterPro" id="IPR011992">
    <property type="entry name" value="EF-hand-dom_pair"/>
</dbReference>
<dbReference type="InterPro" id="IPR018247">
    <property type="entry name" value="EF_Hand_1_Ca_BS"/>
</dbReference>
<dbReference type="InterPro" id="IPR002048">
    <property type="entry name" value="EF_hand_dom"/>
</dbReference>
<dbReference type="PANTHER" id="PTHR23050">
    <property type="entry name" value="CALCIUM BINDING PROTEIN"/>
    <property type="match status" value="1"/>
</dbReference>
<dbReference type="Pfam" id="PF13202">
    <property type="entry name" value="EF-hand_5"/>
    <property type="match status" value="1"/>
</dbReference>
<dbReference type="Pfam" id="PF13499">
    <property type="entry name" value="EF-hand_7"/>
    <property type="match status" value="1"/>
</dbReference>
<dbReference type="SMART" id="SM00054">
    <property type="entry name" value="EFh"/>
    <property type="match status" value="3"/>
</dbReference>
<dbReference type="SUPFAM" id="SSF47473">
    <property type="entry name" value="EF-hand"/>
    <property type="match status" value="1"/>
</dbReference>
<dbReference type="PROSITE" id="PS00018">
    <property type="entry name" value="EF_HAND_1"/>
    <property type="match status" value="3"/>
</dbReference>
<dbReference type="PROSITE" id="PS50222">
    <property type="entry name" value="EF_HAND_2"/>
    <property type="match status" value="3"/>
</dbReference>
<reference key="1">
    <citation type="journal article" date="2002" name="Biochemistry">
        <title>Obelin from the bioluminescent marine hydroid Obelia geniculata: cloning, expression, and comparison of some properties with those of other Ca2+-regulated photoproteins.</title>
        <authorList>
            <person name="Markova S.V."/>
            <person name="Vysotski E.S."/>
            <person name="Blinks J.R."/>
            <person name="Burakova L.P."/>
            <person name="Wang B.C."/>
            <person name="Lee J."/>
        </authorList>
    </citation>
    <scope>NUCLEOTIDE SEQUENCE [MRNA]</scope>
    <scope>CHARACTERIZATION</scope>
</reference>
<protein>
    <recommendedName>
        <fullName>Obelin</fullName>
        <shortName>OBL</shortName>
    </recommendedName>
</protein>
<feature type="propeptide" id="PRO_0000004134" evidence="2">
    <location>
        <begin position="1"/>
        <end position="6"/>
    </location>
</feature>
<feature type="chain" id="PRO_0000004135" description="Obelin">
    <location>
        <begin position="7"/>
        <end position="195"/>
    </location>
</feature>
<feature type="domain" description="EF-hand 1" evidence="3">
    <location>
        <begin position="17"/>
        <end position="52"/>
    </location>
</feature>
<feature type="domain" description="EF-hand 2" evidence="1">
    <location>
        <begin position="53"/>
        <end position="88"/>
    </location>
</feature>
<feature type="domain" description="EF-hand 3" evidence="3">
    <location>
        <begin position="110"/>
        <end position="145"/>
    </location>
</feature>
<feature type="domain" description="EF-hand 4" evidence="3">
    <location>
        <begin position="146"/>
        <end position="181"/>
    </location>
</feature>
<feature type="binding site" evidence="3">
    <location>
        <position position="30"/>
    </location>
    <ligand>
        <name>Ca(2+)</name>
        <dbReference type="ChEBI" id="CHEBI:29108"/>
        <label>1</label>
    </ligand>
</feature>
<feature type="binding site" evidence="3">
    <location>
        <position position="32"/>
    </location>
    <ligand>
        <name>Ca(2+)</name>
        <dbReference type="ChEBI" id="CHEBI:29108"/>
        <label>1</label>
    </ligand>
</feature>
<feature type="binding site" evidence="3">
    <location>
        <position position="34"/>
    </location>
    <ligand>
        <name>Ca(2+)</name>
        <dbReference type="ChEBI" id="CHEBI:29108"/>
        <label>1</label>
    </ligand>
</feature>
<feature type="binding site" evidence="3">
    <location>
        <position position="36"/>
    </location>
    <ligand>
        <name>Ca(2+)</name>
        <dbReference type="ChEBI" id="CHEBI:29108"/>
        <label>1</label>
    </ligand>
</feature>
<feature type="binding site" evidence="3">
    <location>
        <position position="41"/>
    </location>
    <ligand>
        <name>Ca(2+)</name>
        <dbReference type="ChEBI" id="CHEBI:29108"/>
        <label>1</label>
    </ligand>
</feature>
<feature type="binding site" evidence="3">
    <location>
        <position position="123"/>
    </location>
    <ligand>
        <name>Ca(2+)</name>
        <dbReference type="ChEBI" id="CHEBI:29108"/>
        <label>2</label>
    </ligand>
</feature>
<feature type="binding site" evidence="3">
    <location>
        <position position="125"/>
    </location>
    <ligand>
        <name>Ca(2+)</name>
        <dbReference type="ChEBI" id="CHEBI:29108"/>
        <label>2</label>
    </ligand>
</feature>
<feature type="binding site" evidence="3">
    <location>
        <position position="127"/>
    </location>
    <ligand>
        <name>Ca(2+)</name>
        <dbReference type="ChEBI" id="CHEBI:29108"/>
        <label>2</label>
    </ligand>
</feature>
<feature type="binding site" evidence="3">
    <location>
        <position position="129"/>
    </location>
    <ligand>
        <name>Ca(2+)</name>
        <dbReference type="ChEBI" id="CHEBI:29108"/>
        <label>2</label>
    </ligand>
</feature>
<feature type="binding site" evidence="3">
    <location>
        <position position="134"/>
    </location>
    <ligand>
        <name>Ca(2+)</name>
        <dbReference type="ChEBI" id="CHEBI:29108"/>
        <label>2</label>
    </ligand>
</feature>
<feature type="binding site" evidence="3">
    <location>
        <position position="159"/>
    </location>
    <ligand>
        <name>Ca(2+)</name>
        <dbReference type="ChEBI" id="CHEBI:29108"/>
        <label>3</label>
    </ligand>
</feature>
<feature type="binding site" evidence="3">
    <location>
        <position position="161"/>
    </location>
    <ligand>
        <name>Ca(2+)</name>
        <dbReference type="ChEBI" id="CHEBI:29108"/>
        <label>3</label>
    </ligand>
</feature>
<feature type="binding site" evidence="3">
    <location>
        <position position="163"/>
    </location>
    <ligand>
        <name>Ca(2+)</name>
        <dbReference type="ChEBI" id="CHEBI:29108"/>
        <label>3</label>
    </ligand>
</feature>
<feature type="binding site" evidence="3">
    <location>
        <position position="165"/>
    </location>
    <ligand>
        <name>Ca(2+)</name>
        <dbReference type="ChEBI" id="CHEBI:29108"/>
        <label>3</label>
    </ligand>
</feature>
<feature type="binding site" evidence="3">
    <location>
        <position position="170"/>
    </location>
    <ligand>
        <name>Ca(2+)</name>
        <dbReference type="ChEBI" id="CHEBI:29108"/>
        <label>3</label>
    </ligand>
</feature>
<evidence type="ECO:0000250" key="1">
    <source>
        <dbReference type="UniProtKB" id="P02592"/>
    </source>
</evidence>
<evidence type="ECO:0000255" key="2"/>
<evidence type="ECO:0000255" key="3">
    <source>
        <dbReference type="PROSITE-ProRule" id="PRU00448"/>
    </source>
</evidence>
<evidence type="ECO:0000305" key="4"/>
<keyword id="KW-0106">Calcium</keyword>
<keyword id="KW-0455">Luminescence</keyword>
<keyword id="KW-0479">Metal-binding</keyword>
<keyword id="KW-0599">Photoprotein</keyword>
<keyword id="KW-0677">Repeat</keyword>
<sequence length="195" mass="22163">MASKYAVKLQTDFDNPKWIKRHKFMFDYLDINGNGQITLDEIVSKASDDICKNLGATPAQTQRHQDCVEAFFRGCGLEYGKETKFPEFLEGWKNLANADLAKWARNEPTLIREWGDAVFDIFDKDGSGTITLDEWKAYGRISGISPSEEDCEKTFQHCDLDNSGELDVDEMTRQHLGFWYTLDPEADGLYGNGVP</sequence>
<organism>
    <name type="scientific">Obelia geniculata</name>
    <name type="common">Knotted thread hydroid</name>
    <dbReference type="NCBI Taxonomy" id="185004"/>
    <lineage>
        <taxon>Eukaryota</taxon>
        <taxon>Metazoa</taxon>
        <taxon>Cnidaria</taxon>
        <taxon>Hydrozoa</taxon>
        <taxon>Hydroidolina</taxon>
        <taxon>Leptothecata</taxon>
        <taxon>Obeliida</taxon>
        <taxon>Obeliidae</taxon>
        <taxon>Obelia</taxon>
    </lineage>
</organism>
<accession>Q8T6Z0</accession>
<comment type="function">
    <text>Ca(2+)-dependent bioluminescence photoprotein. Displays an emission peak at 495 nm (blue light). Trace amounts of calcium ion trigger the intramolecular oxidation of the chromophore, coelenterazine into coelenteramide and CO(2) with the concomitant emission of light.</text>
</comment>
<comment type="biophysicochemical properties">
    <absorption>
        <max>280 nm</max>
        <text>Exhibits a smaller absorbance peak at 460 nm and a shoulder at approximately 310 nm. The calcium-discharged protein loses visible absorption but exhibits a new absorption maximum at 343 nm. Exhibits a blue bioluminescence (lambda(max) = 495 nm). In contrast, the fluorescence of the calcium-discharged protein is yellow-green (lambda(max) = 520 nm, excitation at 340 nm).</text>
    </absorption>
</comment>
<comment type="similarity">
    <text evidence="4">Belongs to the aequorin family.</text>
</comment>
<name>OBL_OBEGE</name>
<proteinExistence type="evidence at protein level"/>